<organism>
    <name type="scientific">Teredinibacter turnerae (strain ATCC 39867 / T7901)</name>
    <dbReference type="NCBI Taxonomy" id="377629"/>
    <lineage>
        <taxon>Bacteria</taxon>
        <taxon>Pseudomonadati</taxon>
        <taxon>Pseudomonadota</taxon>
        <taxon>Gammaproteobacteria</taxon>
        <taxon>Cellvibrionales</taxon>
        <taxon>Cellvibrionaceae</taxon>
        <taxon>Teredinibacter</taxon>
    </lineage>
</organism>
<feature type="chain" id="PRO_1000206417" description="Small ribosomal subunit protein uS7">
    <location>
        <begin position="1"/>
        <end position="156"/>
    </location>
</feature>
<dbReference type="EMBL" id="CP001614">
    <property type="protein sequence ID" value="ACR11067.1"/>
    <property type="molecule type" value="Genomic_DNA"/>
</dbReference>
<dbReference type="RefSeq" id="WP_015817179.1">
    <property type="nucleotide sequence ID" value="NC_012997.1"/>
</dbReference>
<dbReference type="SMR" id="C5BQ42"/>
<dbReference type="STRING" id="377629.TERTU_0887"/>
<dbReference type="KEGG" id="ttu:TERTU_0887"/>
<dbReference type="eggNOG" id="COG0049">
    <property type="taxonomic scope" value="Bacteria"/>
</dbReference>
<dbReference type="HOGENOM" id="CLU_072226_1_1_6"/>
<dbReference type="OrthoDB" id="9807653at2"/>
<dbReference type="Proteomes" id="UP000009080">
    <property type="component" value="Chromosome"/>
</dbReference>
<dbReference type="GO" id="GO:0015935">
    <property type="term" value="C:small ribosomal subunit"/>
    <property type="evidence" value="ECO:0007669"/>
    <property type="project" value="InterPro"/>
</dbReference>
<dbReference type="GO" id="GO:0019843">
    <property type="term" value="F:rRNA binding"/>
    <property type="evidence" value="ECO:0007669"/>
    <property type="project" value="UniProtKB-UniRule"/>
</dbReference>
<dbReference type="GO" id="GO:0003735">
    <property type="term" value="F:structural constituent of ribosome"/>
    <property type="evidence" value="ECO:0007669"/>
    <property type="project" value="InterPro"/>
</dbReference>
<dbReference type="GO" id="GO:0000049">
    <property type="term" value="F:tRNA binding"/>
    <property type="evidence" value="ECO:0007669"/>
    <property type="project" value="UniProtKB-UniRule"/>
</dbReference>
<dbReference type="GO" id="GO:0006412">
    <property type="term" value="P:translation"/>
    <property type="evidence" value="ECO:0007669"/>
    <property type="project" value="UniProtKB-UniRule"/>
</dbReference>
<dbReference type="CDD" id="cd14869">
    <property type="entry name" value="uS7_Bacteria"/>
    <property type="match status" value="1"/>
</dbReference>
<dbReference type="FunFam" id="1.10.455.10:FF:000001">
    <property type="entry name" value="30S ribosomal protein S7"/>
    <property type="match status" value="1"/>
</dbReference>
<dbReference type="Gene3D" id="1.10.455.10">
    <property type="entry name" value="Ribosomal protein S7 domain"/>
    <property type="match status" value="1"/>
</dbReference>
<dbReference type="HAMAP" id="MF_00480_B">
    <property type="entry name" value="Ribosomal_uS7_B"/>
    <property type="match status" value="1"/>
</dbReference>
<dbReference type="InterPro" id="IPR000235">
    <property type="entry name" value="Ribosomal_uS7"/>
</dbReference>
<dbReference type="InterPro" id="IPR005717">
    <property type="entry name" value="Ribosomal_uS7_bac/org-type"/>
</dbReference>
<dbReference type="InterPro" id="IPR020606">
    <property type="entry name" value="Ribosomal_uS7_CS"/>
</dbReference>
<dbReference type="InterPro" id="IPR023798">
    <property type="entry name" value="Ribosomal_uS7_dom"/>
</dbReference>
<dbReference type="InterPro" id="IPR036823">
    <property type="entry name" value="Ribosomal_uS7_dom_sf"/>
</dbReference>
<dbReference type="NCBIfam" id="TIGR01029">
    <property type="entry name" value="rpsG_bact"/>
    <property type="match status" value="1"/>
</dbReference>
<dbReference type="PANTHER" id="PTHR11205">
    <property type="entry name" value="RIBOSOMAL PROTEIN S7"/>
    <property type="match status" value="1"/>
</dbReference>
<dbReference type="Pfam" id="PF00177">
    <property type="entry name" value="Ribosomal_S7"/>
    <property type="match status" value="1"/>
</dbReference>
<dbReference type="PIRSF" id="PIRSF002122">
    <property type="entry name" value="RPS7p_RPS7a_RPS5e_RPS7o"/>
    <property type="match status" value="1"/>
</dbReference>
<dbReference type="SUPFAM" id="SSF47973">
    <property type="entry name" value="Ribosomal protein S7"/>
    <property type="match status" value="1"/>
</dbReference>
<dbReference type="PROSITE" id="PS00052">
    <property type="entry name" value="RIBOSOMAL_S7"/>
    <property type="match status" value="1"/>
</dbReference>
<sequence length="156" mass="17757">MPRRRVVAKREVLPDPKFGNVTLAKFMNHVMISGKKSVAERIVYGALDLVKEKLNKDPLEVFDEALENIAPLVEVKSRRVGGATYQVPVEVRPSRREALAMRWLVEYSRNRGEKSMPQRLAGELIDASQNKGGAVKKREDVHRMAEANKAFSHFRF</sequence>
<name>RS7_TERTT</name>
<reference key="1">
    <citation type="journal article" date="2009" name="PLoS ONE">
        <title>The complete genome of Teredinibacter turnerae T7901: an intracellular endosymbiont of marine wood-boring bivalves (shipworms).</title>
        <authorList>
            <person name="Yang J.C."/>
            <person name="Madupu R."/>
            <person name="Durkin A.S."/>
            <person name="Ekborg N.A."/>
            <person name="Pedamallu C.S."/>
            <person name="Hostetler J.B."/>
            <person name="Radune D."/>
            <person name="Toms B.S."/>
            <person name="Henrissat B."/>
            <person name="Coutinho P.M."/>
            <person name="Schwarz S."/>
            <person name="Field L."/>
            <person name="Trindade-Silva A.E."/>
            <person name="Soares C.A.G."/>
            <person name="Elshahawi S."/>
            <person name="Hanora A."/>
            <person name="Schmidt E.W."/>
            <person name="Haygood M.G."/>
            <person name="Posfai J."/>
            <person name="Benner J."/>
            <person name="Madinger C."/>
            <person name="Nove J."/>
            <person name="Anton B."/>
            <person name="Chaudhary K."/>
            <person name="Foster J."/>
            <person name="Holman A."/>
            <person name="Kumar S."/>
            <person name="Lessard P.A."/>
            <person name="Luyten Y.A."/>
            <person name="Slatko B."/>
            <person name="Wood N."/>
            <person name="Wu B."/>
            <person name="Teplitski M."/>
            <person name="Mougous J.D."/>
            <person name="Ward N."/>
            <person name="Eisen J.A."/>
            <person name="Badger J.H."/>
            <person name="Distel D.L."/>
        </authorList>
    </citation>
    <scope>NUCLEOTIDE SEQUENCE [LARGE SCALE GENOMIC DNA]</scope>
    <source>
        <strain>ATCC 39867 / T7901</strain>
    </source>
</reference>
<accession>C5BQ42</accession>
<keyword id="KW-1185">Reference proteome</keyword>
<keyword id="KW-0687">Ribonucleoprotein</keyword>
<keyword id="KW-0689">Ribosomal protein</keyword>
<keyword id="KW-0694">RNA-binding</keyword>
<keyword id="KW-0699">rRNA-binding</keyword>
<keyword id="KW-0820">tRNA-binding</keyword>
<proteinExistence type="inferred from homology"/>
<comment type="function">
    <text evidence="1">One of the primary rRNA binding proteins, it binds directly to 16S rRNA where it nucleates assembly of the head domain of the 30S subunit. Is located at the subunit interface close to the decoding center, probably blocks exit of the E-site tRNA.</text>
</comment>
<comment type="subunit">
    <text evidence="1">Part of the 30S ribosomal subunit. Contacts proteins S9 and S11.</text>
</comment>
<comment type="similarity">
    <text evidence="1">Belongs to the universal ribosomal protein uS7 family.</text>
</comment>
<gene>
    <name evidence="1" type="primary">rpsG</name>
    <name type="ordered locus">TERTU_0887</name>
</gene>
<protein>
    <recommendedName>
        <fullName evidence="1">Small ribosomal subunit protein uS7</fullName>
    </recommendedName>
    <alternativeName>
        <fullName evidence="2">30S ribosomal protein S7</fullName>
    </alternativeName>
</protein>
<evidence type="ECO:0000255" key="1">
    <source>
        <dbReference type="HAMAP-Rule" id="MF_00480"/>
    </source>
</evidence>
<evidence type="ECO:0000305" key="2"/>